<dbReference type="EC" id="2.4.99.-" evidence="6"/>
<dbReference type="EMBL" id="AC119291">
    <property type="protein sequence ID" value="AAV59411.1"/>
    <property type="molecule type" value="Genomic_DNA"/>
</dbReference>
<dbReference type="EMBL" id="AP008211">
    <property type="protein sequence ID" value="BAF18092.1"/>
    <property type="molecule type" value="Genomic_DNA"/>
</dbReference>
<dbReference type="EMBL" id="AP014961">
    <property type="protein sequence ID" value="BAS95108.1"/>
    <property type="molecule type" value="Genomic_DNA"/>
</dbReference>
<dbReference type="RefSeq" id="XP_015639319.1">
    <property type="nucleotide sequence ID" value="XM_015783833.1"/>
</dbReference>
<dbReference type="SMR" id="Q53WK1"/>
<dbReference type="STRING" id="39947.Q53WK1"/>
<dbReference type="CAZy" id="GT64">
    <property type="family name" value="Glycosyltransferase Family 64"/>
</dbReference>
<dbReference type="PaxDb" id="39947-Q53WK1"/>
<dbReference type="EnsemblPlants" id="Os05t0540000-01">
    <property type="protein sequence ID" value="Os05t0540000-01"/>
    <property type="gene ID" value="Os05g0540000"/>
</dbReference>
<dbReference type="Gramene" id="Os05t0540000-01">
    <property type="protein sequence ID" value="Os05t0540000-01"/>
    <property type="gene ID" value="Os05g0540000"/>
</dbReference>
<dbReference type="KEGG" id="dosa:Os05g0540000"/>
<dbReference type="eggNOG" id="KOG1022">
    <property type="taxonomic scope" value="Eukaryota"/>
</dbReference>
<dbReference type="HOGENOM" id="CLU_010984_0_0_1"/>
<dbReference type="InParanoid" id="Q53WK1"/>
<dbReference type="OMA" id="GIVNVCI"/>
<dbReference type="OrthoDB" id="5954868at2759"/>
<dbReference type="Proteomes" id="UP000000763">
    <property type="component" value="Chromosome 5"/>
</dbReference>
<dbReference type="Proteomes" id="UP000059680">
    <property type="component" value="Chromosome 5"/>
</dbReference>
<dbReference type="GO" id="GO:0016020">
    <property type="term" value="C:membrane"/>
    <property type="evidence" value="ECO:0007669"/>
    <property type="project" value="UniProtKB-SubCell"/>
</dbReference>
<dbReference type="GO" id="GO:0016757">
    <property type="term" value="F:glycosyltransferase activity"/>
    <property type="evidence" value="ECO:0000315"/>
    <property type="project" value="UniProtKB"/>
</dbReference>
<dbReference type="GO" id="GO:0046872">
    <property type="term" value="F:metal ion binding"/>
    <property type="evidence" value="ECO:0007669"/>
    <property type="project" value="UniProtKB-KW"/>
</dbReference>
<dbReference type="GO" id="GO:0030259">
    <property type="term" value="P:lipid glycosylation"/>
    <property type="evidence" value="ECO:0000315"/>
    <property type="project" value="UniProtKB"/>
</dbReference>
<dbReference type="GO" id="GO:0006486">
    <property type="term" value="P:protein glycosylation"/>
    <property type="evidence" value="ECO:0007669"/>
    <property type="project" value="InterPro"/>
</dbReference>
<dbReference type="FunFam" id="2.115.10.20:FF:000004">
    <property type="entry name" value="Glucosamine inositolphosphorylceramide transferase 1"/>
    <property type="match status" value="1"/>
</dbReference>
<dbReference type="FunFam" id="3.90.550.10:FF:000095">
    <property type="entry name" value="Glycosyltransferase family protein 64 protein C5"/>
    <property type="match status" value="1"/>
</dbReference>
<dbReference type="Gene3D" id="2.115.10.20">
    <property type="entry name" value="Glycosyl hydrolase domain, family 43"/>
    <property type="match status" value="1"/>
</dbReference>
<dbReference type="Gene3D" id="3.90.550.10">
    <property type="entry name" value="Spore Coat Polysaccharide Biosynthesis Protein SpsA, Chain A"/>
    <property type="match status" value="1"/>
</dbReference>
<dbReference type="InterPro" id="IPR004263">
    <property type="entry name" value="Exostosin"/>
</dbReference>
<dbReference type="InterPro" id="IPR056442">
    <property type="entry name" value="GINT1_N"/>
</dbReference>
<dbReference type="InterPro" id="IPR023296">
    <property type="entry name" value="Glyco_hydro_beta-prop_sf"/>
</dbReference>
<dbReference type="InterPro" id="IPR015338">
    <property type="entry name" value="GT64_dom"/>
</dbReference>
<dbReference type="InterPro" id="IPR029044">
    <property type="entry name" value="Nucleotide-diphossugar_trans"/>
</dbReference>
<dbReference type="PANTHER" id="PTHR48261">
    <property type="entry name" value="ACETYLGLUCOSAMINYLTRANSFERASE"/>
    <property type="match status" value="1"/>
</dbReference>
<dbReference type="PANTHER" id="PTHR48261:SF6">
    <property type="entry name" value="GLYCOSYLTRANSFERASE FAMILY PROTEIN"/>
    <property type="match status" value="1"/>
</dbReference>
<dbReference type="Pfam" id="PF24793">
    <property type="entry name" value="GINT1_N"/>
    <property type="match status" value="1"/>
</dbReference>
<dbReference type="Pfam" id="PF09258">
    <property type="entry name" value="Glyco_transf_64"/>
    <property type="match status" value="1"/>
</dbReference>
<dbReference type="SUPFAM" id="SSF75005">
    <property type="entry name" value="Arabinanase/levansucrase/invertase"/>
    <property type="match status" value="1"/>
</dbReference>
<dbReference type="SUPFAM" id="SSF53448">
    <property type="entry name" value="Nucleotide-diphospho-sugar transferases"/>
    <property type="match status" value="1"/>
</dbReference>
<reference key="1">
    <citation type="journal article" date="2005" name="Nature">
        <title>The map-based sequence of the rice genome.</title>
        <authorList>
            <consortium name="International rice genome sequencing project (IRGSP)"/>
        </authorList>
    </citation>
    <scope>NUCLEOTIDE SEQUENCE [LARGE SCALE GENOMIC DNA]</scope>
    <source>
        <strain>cv. Nipponbare</strain>
    </source>
</reference>
<reference key="2">
    <citation type="journal article" date="2008" name="Nucleic Acids Res.">
        <title>The rice annotation project database (RAP-DB): 2008 update.</title>
        <authorList>
            <consortium name="The rice annotation project (RAP)"/>
        </authorList>
    </citation>
    <scope>GENOME REANNOTATION</scope>
    <source>
        <strain>cv. Nipponbare</strain>
    </source>
</reference>
<reference key="3">
    <citation type="journal article" date="2013" name="Rice">
        <title>Improvement of the Oryza sativa Nipponbare reference genome using next generation sequence and optical map data.</title>
        <authorList>
            <person name="Kawahara Y."/>
            <person name="de la Bastide M."/>
            <person name="Hamilton J.P."/>
            <person name="Kanamori H."/>
            <person name="McCombie W.R."/>
            <person name="Ouyang S."/>
            <person name="Schwartz D.C."/>
            <person name="Tanaka T."/>
            <person name="Wu J."/>
            <person name="Zhou S."/>
            <person name="Childs K.L."/>
            <person name="Davidson R.M."/>
            <person name="Lin H."/>
            <person name="Quesada-Ocampo L."/>
            <person name="Vaillancourt B."/>
            <person name="Sakai H."/>
            <person name="Lee S.S."/>
            <person name="Kim J."/>
            <person name="Numa H."/>
            <person name="Itoh T."/>
            <person name="Buell C.R."/>
            <person name="Matsumoto T."/>
        </authorList>
    </citation>
    <scope>GENOME REANNOTATION</scope>
    <source>
        <strain>cv. Nipponbare</strain>
    </source>
</reference>
<reference key="4">
    <citation type="journal article" date="2018" name="Plant Physiol.">
        <title>GLUCOSAMINE INOSITOLPHOSPHORYLCERAMIDE TRANSFERASE1 (GINT1) is a GlcNAc-containing glycosylinositol phosphorylceramide glycosyltransferase.</title>
        <authorList>
            <person name="Ishikawa T."/>
            <person name="Fang L."/>
            <person name="Rennie E.A."/>
            <person name="Sechet J."/>
            <person name="Yan J."/>
            <person name="Jing B."/>
            <person name="Moore W."/>
            <person name="Cahoon E.B."/>
            <person name="Scheller H.V."/>
            <person name="Kawai-Yamada M."/>
            <person name="Mortimer J.C."/>
        </authorList>
    </citation>
    <scope>FUNCTION</scope>
    <scope>DISRUPTION PHENOTYPE</scope>
    <scope>PATHWAY</scope>
    <scope>TISSUE SPECIFICITY</scope>
</reference>
<gene>
    <name evidence="4" type="primary">GINT1</name>
    <name evidence="8" type="ordered locus">Os05g0540000</name>
    <name evidence="5" type="ordered locus">LOC_Os05g46260</name>
    <name evidence="7" type="ORF">OSJNBa0052K01.21</name>
    <name evidence="9" type="ORF">OSNPB_050540000</name>
</gene>
<protein>
    <recommendedName>
        <fullName evidence="4">Glucosamine inositolphosphorylceramide transferase 1</fullName>
        <ecNumber evidence="6">2.4.99.-</ecNumber>
    </recommendedName>
</protein>
<accession>Q53WK1</accession>
<proteinExistence type="evidence at transcript level"/>
<comment type="function">
    <text evidence="3">Essential protein. Glycosyltransferase that mediates the glycosylation of glycosylinositol phosphorylceramides (GIPCs), the major sphingolipids in the plasma membrane; acts as a HexN(Ac)-specific GIPC sugar transferase. Responsible for the glycosylation of a subgroup of GIPCs found in seeds and pollen that contain GlcNAc and GlcN (GlcN(Ac)). Maybe involved in the maintenance of cell-cell adhesion.</text>
</comment>
<comment type="cofactor">
    <cofactor evidence="1">
        <name>Mn(2+)</name>
        <dbReference type="ChEBI" id="CHEBI:29035"/>
    </cofactor>
</comment>
<comment type="pathway">
    <text evidence="3">Sphingolipid metabolism.</text>
</comment>
<comment type="subcellular location">
    <subcellularLocation>
        <location evidence="2">Membrane</location>
        <topology evidence="2">Multi-pass membrane protein</topology>
    </subcellularLocation>
</comment>
<comment type="tissue specificity">
    <text evidence="3">Highly expressed in almost all tissues.</text>
</comment>
<comment type="disruption phenotype">
    <text evidence="3">Loss of the GlcN(Ac) glycosylinositol phosphorylceramides (GIPCs) is seedling lethal. Stunted plants when regenerated from callus.</text>
</comment>
<comment type="similarity">
    <text evidence="5">Belongs to the glycosyltransferase 64 family.</text>
</comment>
<comment type="online information" name="CAZY, the Carbohydrate Active enZYmes database">
    <link uri="https://www.cazy.org/GT64_all.html"/>
</comment>
<name>GINT1_ORYSJ</name>
<keyword id="KW-1015">Disulfide bond</keyword>
<keyword id="KW-0464">Manganese</keyword>
<keyword id="KW-0472">Membrane</keyword>
<keyword id="KW-0479">Metal-binding</keyword>
<keyword id="KW-1185">Reference proteome</keyword>
<keyword id="KW-0808">Transferase</keyword>
<keyword id="KW-0812">Transmembrane</keyword>
<keyword id="KW-1133">Transmembrane helix</keyword>
<evidence type="ECO:0000250" key="1">
    <source>
        <dbReference type="UniProtKB" id="Q9ES89"/>
    </source>
</evidence>
<evidence type="ECO:0000255" key="2"/>
<evidence type="ECO:0000269" key="3">
    <source>
    </source>
</evidence>
<evidence type="ECO:0000303" key="4">
    <source>
    </source>
</evidence>
<evidence type="ECO:0000305" key="5"/>
<evidence type="ECO:0000305" key="6">
    <source>
    </source>
</evidence>
<evidence type="ECO:0000312" key="7">
    <source>
        <dbReference type="EMBL" id="AAV59411.1"/>
    </source>
</evidence>
<evidence type="ECO:0000312" key="8">
    <source>
        <dbReference type="EMBL" id="BAF18092.1"/>
    </source>
</evidence>
<evidence type="ECO:0000312" key="9">
    <source>
        <dbReference type="EMBL" id="BAS95108.1"/>
    </source>
</evidence>
<organism>
    <name type="scientific">Oryza sativa subsp. japonica</name>
    <name type="common">Rice</name>
    <dbReference type="NCBI Taxonomy" id="39947"/>
    <lineage>
        <taxon>Eukaryota</taxon>
        <taxon>Viridiplantae</taxon>
        <taxon>Streptophyta</taxon>
        <taxon>Embryophyta</taxon>
        <taxon>Tracheophyta</taxon>
        <taxon>Spermatophyta</taxon>
        <taxon>Magnoliopsida</taxon>
        <taxon>Liliopsida</taxon>
        <taxon>Poales</taxon>
        <taxon>Poaceae</taxon>
        <taxon>BOP clade</taxon>
        <taxon>Oryzoideae</taxon>
        <taxon>Oryzeae</taxon>
        <taxon>Oryzinae</taxon>
        <taxon>Oryza</taxon>
        <taxon>Oryza sativa</taxon>
    </lineage>
</organism>
<sequence length="744" mass="84227">MAGRRAMRPSGSSMRGVVARLAAARSPAVSFLVAAAAGAALVGGVYFWLVVSSFRLPDSRAVGCLPDGEGSWAIGMYYGKSPLELRPIELEGRSNGNSSAWPVANPVLTCATPTEGGYPSNFVADPFLYVQGDTLFLFFETKTVSTMQGDIGVARSLDQGATWEFLGIALDEAWHLSYPFVFKYENEIYMMPEGNKKKELRLYRATKFPLEWTLEKVLIDKPLIDSSLVQYDGLWWLFASDFTRHGIEKNAELEIWYSNSPLGPWSEHKQNPIYRSDKSLGARNGGRLFIFEGSLYRPGQDCSGTYGRKVKLYKIEKLTKEEYKEVPVNLGIEEAKKGRNAWNGMRYHHIDAQQLASGGWVAVMDGDRVPSGDSTRRSLFGYMGFLVAVALVTFVGFVKGAISCYIPPSFWVPLTRRSELSRILPVHRFNLKIRRYSTSIGRNISATKARLSEKTWSNTLFFCVIALIGIVNVCIAVHFLLGGNGAEEAYTHQGQHSQFTMVTMTYEARLWNLKLFVEHYSRCESVREIVVVWNKGNHPTSDAFDSTVPVRIRVEEINSLNNRFRGDPLIKTRAVLELDDDIMMTCSDVEKGFKVWREHPERMVGFYPRMIDGDPLQYRNERYARGKKGYNLILTGAAFMDSEFAFSKYWSQEAKEGRDYVHKNFNCEDLLMNFLYANASSSRTVEYVHPAWAIDTSKLSSVAISRDTQKHYDIRTKCLAKFASIYGPLPQKWLFGMREDGWDK</sequence>
<feature type="chain" id="PRO_0000445782" description="Glucosamine inositolphosphorylceramide transferase 1">
    <location>
        <begin position="1"/>
        <end position="744"/>
    </location>
</feature>
<feature type="transmembrane region" description="Helical; Name=1" evidence="2">
    <location>
        <begin position="31"/>
        <end position="51"/>
    </location>
</feature>
<feature type="transmembrane region" description="Helical; Name=2" evidence="2">
    <location>
        <begin position="378"/>
        <end position="398"/>
    </location>
</feature>
<feature type="transmembrane region" description="Helical; Name=3" evidence="2">
    <location>
        <begin position="460"/>
        <end position="480"/>
    </location>
</feature>
<feature type="active site" evidence="1">
    <location>
        <position position="669"/>
    </location>
</feature>
<feature type="binding site" evidence="1">
    <location>
        <position position="534"/>
    </location>
    <ligand>
        <name>substrate</name>
    </ligand>
</feature>
<feature type="binding site" evidence="1">
    <location>
        <begin position="558"/>
        <end position="563"/>
    </location>
    <ligand>
        <name>substrate</name>
    </ligand>
</feature>
<feature type="binding site" evidence="1">
    <location>
        <begin position="579"/>
        <end position="581"/>
    </location>
    <ligand>
        <name>substrate</name>
    </ligand>
</feature>
<feature type="binding site" evidence="1">
    <location>
        <position position="581"/>
    </location>
    <ligand>
        <name>Mn(2+)</name>
        <dbReference type="ChEBI" id="CHEBI:29035"/>
        <note>catalytic</note>
    </ligand>
</feature>
<feature type="binding site" evidence="1">
    <location>
        <position position="609"/>
    </location>
    <ligand>
        <name>substrate</name>
    </ligand>
</feature>
<feature type="binding site" evidence="1">
    <location>
        <begin position="665"/>
        <end position="669"/>
    </location>
    <ligand>
        <name>substrate</name>
    </ligand>
</feature>
<feature type="disulfide bond" evidence="1">
    <location>
        <begin position="667"/>
        <end position="718"/>
    </location>
</feature>